<gene>
    <name type="primary">OMD</name>
</gene>
<dbReference type="EMBL" id="U67279">
    <property type="protein sequence ID" value="AAC39259.1"/>
    <property type="molecule type" value="mRNA"/>
</dbReference>
<dbReference type="RefSeq" id="NP_776372.1">
    <property type="nucleotide sequence ID" value="NM_173947.2"/>
</dbReference>
<dbReference type="SMR" id="O77742"/>
<dbReference type="FunCoup" id="O77742">
    <property type="interactions" value="31"/>
</dbReference>
<dbReference type="STRING" id="9913.ENSBTAP00000015704"/>
<dbReference type="GlyCosmos" id="O77742">
    <property type="glycosylation" value="6 sites, No reported glycans"/>
</dbReference>
<dbReference type="GlyGen" id="O77742">
    <property type="glycosylation" value="6 sites"/>
</dbReference>
<dbReference type="PaxDb" id="9913-ENSBTAP00000015704"/>
<dbReference type="GeneID" id="280885"/>
<dbReference type="KEGG" id="bta:280885"/>
<dbReference type="CTD" id="4958"/>
<dbReference type="eggNOG" id="KOG0619">
    <property type="taxonomic scope" value="Eukaryota"/>
</dbReference>
<dbReference type="InParanoid" id="O77742"/>
<dbReference type="OrthoDB" id="1055097at2759"/>
<dbReference type="Proteomes" id="UP000009136">
    <property type="component" value="Unplaced"/>
</dbReference>
<dbReference type="GO" id="GO:0005615">
    <property type="term" value="C:extracellular space"/>
    <property type="evidence" value="ECO:0000318"/>
    <property type="project" value="GO_Central"/>
</dbReference>
<dbReference type="GO" id="GO:0007155">
    <property type="term" value="P:cell adhesion"/>
    <property type="evidence" value="ECO:0007669"/>
    <property type="project" value="UniProtKB-KW"/>
</dbReference>
<dbReference type="FunFam" id="3.80.10.10:FF:000455">
    <property type="entry name" value="Osteomodulin"/>
    <property type="match status" value="1"/>
</dbReference>
<dbReference type="Gene3D" id="3.80.10.10">
    <property type="entry name" value="Ribonuclease Inhibitor"/>
    <property type="match status" value="2"/>
</dbReference>
<dbReference type="InterPro" id="IPR001611">
    <property type="entry name" value="Leu-rich_rpt"/>
</dbReference>
<dbReference type="InterPro" id="IPR003591">
    <property type="entry name" value="Leu-rich_rpt_typical-subtyp"/>
</dbReference>
<dbReference type="InterPro" id="IPR032675">
    <property type="entry name" value="LRR_dom_sf"/>
</dbReference>
<dbReference type="InterPro" id="IPR000372">
    <property type="entry name" value="LRRNT"/>
</dbReference>
<dbReference type="InterPro" id="IPR050333">
    <property type="entry name" value="SLRP"/>
</dbReference>
<dbReference type="PANTHER" id="PTHR45712">
    <property type="entry name" value="AGAP008170-PA"/>
    <property type="match status" value="1"/>
</dbReference>
<dbReference type="PANTHER" id="PTHR45712:SF3">
    <property type="entry name" value="OSTEOMODULIN"/>
    <property type="match status" value="1"/>
</dbReference>
<dbReference type="Pfam" id="PF13855">
    <property type="entry name" value="LRR_8"/>
    <property type="match status" value="2"/>
</dbReference>
<dbReference type="Pfam" id="PF01462">
    <property type="entry name" value="LRRNT"/>
    <property type="match status" value="1"/>
</dbReference>
<dbReference type="SMART" id="SM00364">
    <property type="entry name" value="LRR_BAC"/>
    <property type="match status" value="5"/>
</dbReference>
<dbReference type="SMART" id="SM00369">
    <property type="entry name" value="LRR_TYP"/>
    <property type="match status" value="7"/>
</dbReference>
<dbReference type="SMART" id="SM00013">
    <property type="entry name" value="LRRNT"/>
    <property type="match status" value="1"/>
</dbReference>
<dbReference type="SUPFAM" id="SSF52058">
    <property type="entry name" value="L domain-like"/>
    <property type="match status" value="1"/>
</dbReference>
<dbReference type="PROSITE" id="PS51450">
    <property type="entry name" value="LRR"/>
    <property type="match status" value="8"/>
</dbReference>
<feature type="signal peptide" evidence="2">
    <location>
        <begin position="1"/>
        <end position="20"/>
    </location>
</feature>
<feature type="propeptide" id="PRO_0000032752" evidence="2">
    <location>
        <begin position="21"/>
        <end position="27"/>
    </location>
</feature>
<feature type="chain" id="PRO_0000032753" description="Osteomodulin">
    <location>
        <begin position="28"/>
        <end position="422"/>
    </location>
</feature>
<feature type="domain" description="LRRNT">
    <location>
        <begin position="53"/>
        <end position="91"/>
    </location>
</feature>
<feature type="repeat" description="LRR 1">
    <location>
        <begin position="92"/>
        <end position="113"/>
    </location>
</feature>
<feature type="repeat" description="LRR 2">
    <location>
        <begin position="116"/>
        <end position="129"/>
    </location>
</feature>
<feature type="repeat" description="LRR 3">
    <location>
        <begin position="142"/>
        <end position="164"/>
    </location>
</feature>
<feature type="repeat" description="LRR 4">
    <location>
        <begin position="165"/>
        <end position="184"/>
    </location>
</feature>
<feature type="repeat" description="LRR 5">
    <location>
        <begin position="187"/>
        <end position="207"/>
    </location>
</feature>
<feature type="repeat" description="LRR 6">
    <location>
        <begin position="213"/>
        <end position="233"/>
    </location>
</feature>
<feature type="repeat" description="LRR 7">
    <location>
        <begin position="234"/>
        <end position="255"/>
    </location>
</feature>
<feature type="repeat" description="LRR 8">
    <location>
        <begin position="258"/>
        <end position="280"/>
    </location>
</feature>
<feature type="repeat" description="LRR 9">
    <location>
        <begin position="281"/>
        <end position="294"/>
    </location>
</feature>
<feature type="repeat" description="LRR 10">
    <location>
        <begin position="301"/>
        <end position="322"/>
    </location>
</feature>
<feature type="repeat" description="LRR 11">
    <location>
        <begin position="331"/>
        <end position="353"/>
    </location>
</feature>
<feature type="region of interest" description="Disordered" evidence="3">
    <location>
        <begin position="385"/>
        <end position="422"/>
    </location>
</feature>
<feature type="modified residue" description="Sulfotyrosine" evidence="1">
    <location>
        <position position="22"/>
    </location>
</feature>
<feature type="modified residue" description="Sulfotyrosine" evidence="1">
    <location>
        <position position="25"/>
    </location>
</feature>
<feature type="modified residue" description="Sulfotyrosine" evidence="1">
    <location>
        <position position="31"/>
    </location>
</feature>
<feature type="modified residue" description="Sulfotyrosine" evidence="1">
    <location>
        <position position="39"/>
    </location>
</feature>
<feature type="modified residue" description="Sulfotyrosine" evidence="1">
    <location>
        <position position="51"/>
    </location>
</feature>
<feature type="modified residue" description="Sulfotyrosine" evidence="1">
    <location>
        <position position="77"/>
    </location>
</feature>
<feature type="modified residue" description="Sulfotyrosine" evidence="1">
    <location>
        <position position="412"/>
    </location>
</feature>
<feature type="modified residue" description="Sulfotyrosine" evidence="1">
    <location>
        <position position="413"/>
    </location>
</feature>
<feature type="glycosylation site" description="N-linked (GlcNAc...) asparagine" evidence="2">
    <location>
        <position position="113"/>
    </location>
</feature>
<feature type="glycosylation site" description="N-linked (GlcNAc...) asparagine" evidence="2">
    <location>
        <position position="121"/>
    </location>
</feature>
<feature type="glycosylation site" description="N-linked (GlcNAc...) asparagine" evidence="2">
    <location>
        <position position="187"/>
    </location>
</feature>
<feature type="glycosylation site" description="N-linked (GlcNAc...) asparagine" evidence="2">
    <location>
        <position position="242"/>
    </location>
</feature>
<feature type="glycosylation site" description="N-linked (GlcNAc...) asparagine" evidence="2">
    <location>
        <position position="278"/>
    </location>
</feature>
<feature type="glycosylation site" description="N-linked (GlcNAc...) asparagine" evidence="2">
    <location>
        <position position="316"/>
    </location>
</feature>
<feature type="disulfide bond" evidence="1">
    <location>
        <begin position="321"/>
        <end position="353"/>
    </location>
</feature>
<feature type="sequence conflict" description="In Ref. 2; AA sequence." evidence="5" ref="2">
    <original>L</original>
    <variation>R</variation>
    <location>
        <position position="191"/>
    </location>
</feature>
<feature type="sequence conflict" description="In Ref. 2; AA sequence." evidence="5" ref="2">
    <original>C</original>
    <variation>Y</variation>
    <location>
        <position position="194"/>
    </location>
</feature>
<name>OMD_BOVIN</name>
<reference key="1">
    <citation type="journal article" date="1998" name="J. Biol. Chem.">
        <title>Osteoadherin, a cell binding keratan sulfate proteoglycan in bone, belongs to the family of leucine-rich repeat proteins of the extracellular matrix.</title>
        <authorList>
            <person name="Sommarin Y."/>
            <person name="Wendel M."/>
            <person name="Shen Z."/>
            <person name="Hellman U."/>
            <person name="Heinegaard D."/>
        </authorList>
    </citation>
    <scope>NUCLEOTIDE SEQUENCE [MRNA]</scope>
    <scope>PROTEIN SEQUENCE OF 28-35; 119-126; 132-139; 191-198; 201-207; 264-268; 294-300 AND 377-381</scope>
    <source>
        <tissue>Osteoblast</tissue>
    </source>
</reference>
<reference key="2">
    <citation type="journal article" date="1998" name="J. Cell Biol.">
        <title>Bone matrix proteins: isolation and characterization of a novel cell-binding keratan sulfate proteoglycan (osteoadherin) from bovine bone.</title>
        <authorList>
            <person name="Wendel M."/>
            <person name="Sommarin Y."/>
            <person name="Heinegaard D."/>
        </authorList>
    </citation>
    <scope>PROTEIN SEQUENCE OF 119-126 AND 191-198</scope>
    <scope>FUNCTION</scope>
    <scope>INTERACTION WITH INTEGRIN</scope>
    <scope>TISSUE SPECIFICITY</scope>
    <scope>GLYCOSYLATION</scope>
    <source>
        <tissue>Bone</tissue>
    </source>
</reference>
<protein>
    <recommendedName>
        <fullName>Osteomodulin</fullName>
    </recommendedName>
    <alternativeName>
        <fullName>Keratan sulfate proteoglycan osteomodulin</fullName>
        <shortName>KSPG osteomodulin</shortName>
    </alternativeName>
    <alternativeName>
        <fullName>Osteoadherin</fullName>
        <shortName>OSAD</shortName>
    </alternativeName>
</protein>
<accession>O77742</accession>
<evidence type="ECO:0000250" key="1"/>
<evidence type="ECO:0000255" key="2"/>
<evidence type="ECO:0000256" key="3">
    <source>
        <dbReference type="SAM" id="MobiDB-lite"/>
    </source>
</evidence>
<evidence type="ECO:0000269" key="4">
    <source>
    </source>
</evidence>
<evidence type="ECO:0000305" key="5"/>
<comment type="function">
    <text evidence="4">May be implicated in biomineralization processes. Has a function in binding of osteoblasts via the alpha(V)beta(3)-integrin.</text>
</comment>
<comment type="subunit">
    <text evidence="4">Binds the alpha(V)beta(3)-integrin.</text>
</comment>
<comment type="subcellular location">
    <subcellularLocation>
        <location evidence="1">Secreted</location>
        <location evidence="1">Extracellular space</location>
        <location evidence="1">Extracellular matrix</location>
    </subcellularLocation>
</comment>
<comment type="tissue specificity">
    <text evidence="4">Bone specific (at protein level).</text>
</comment>
<comment type="PTM">
    <text>The N-terminus is blocked.</text>
</comment>
<comment type="PTM">
    <text evidence="4">Glycosylated; contains keratan sulfate.</text>
</comment>
<comment type="PTM">
    <text evidence="5">Sulfated on tyrosine residue(s).</text>
</comment>
<comment type="similarity">
    <text evidence="5">Belongs to the small leucine-rich proteoglycan (SLRP) family. SLRP class II subfamily.</text>
</comment>
<sequence>MGFSSLVCVLFFFLGVKVYCQYESYQWDEDYDQEPDDVYQTEFQFQQNINYEAPFHQHTLGCASECFCPPNFPSSMYCDNRKLKTIPNIPAHIQQVYLQFNEIEAVTADSFINATHLKEINLSHNKIKSQKIDHGVFATLPNLLQLHLQHNNLEDFPFPLPKSLERIFLGYNEISRLQTNAVNGLVNLTMLDLCFNKIDDSVLQEKVLAKMEKLMQLNLCNNRLESMPPGLPSSLMYLSLENNSISSIPENYFNKLPKLHALRISHNKLQDIPYNIFNLSNLIELNVGHNKLKQAFYIPRNLEHLYLENNEIENVNVTVMCPSVDPLHYHHLTHIRIDQNKLKAPISSYIFLCFPHIHTIYYGEQQSTNGQTIQLKTQVFRRFQDDGDSEDHDDHHEGPEEEGTEENIDAHYYGSQEWQETI</sequence>
<proteinExistence type="evidence at protein level"/>
<organism>
    <name type="scientific">Bos taurus</name>
    <name type="common">Bovine</name>
    <dbReference type="NCBI Taxonomy" id="9913"/>
    <lineage>
        <taxon>Eukaryota</taxon>
        <taxon>Metazoa</taxon>
        <taxon>Chordata</taxon>
        <taxon>Craniata</taxon>
        <taxon>Vertebrata</taxon>
        <taxon>Euteleostomi</taxon>
        <taxon>Mammalia</taxon>
        <taxon>Eutheria</taxon>
        <taxon>Laurasiatheria</taxon>
        <taxon>Artiodactyla</taxon>
        <taxon>Ruminantia</taxon>
        <taxon>Pecora</taxon>
        <taxon>Bovidae</taxon>
        <taxon>Bovinae</taxon>
        <taxon>Bos</taxon>
    </lineage>
</organism>
<keyword id="KW-0130">Cell adhesion</keyword>
<keyword id="KW-0903">Direct protein sequencing</keyword>
<keyword id="KW-1015">Disulfide bond</keyword>
<keyword id="KW-0272">Extracellular matrix</keyword>
<keyword id="KW-0325">Glycoprotein</keyword>
<keyword id="KW-0433">Leucine-rich repeat</keyword>
<keyword id="KW-0654">Proteoglycan</keyword>
<keyword id="KW-1185">Reference proteome</keyword>
<keyword id="KW-0677">Repeat</keyword>
<keyword id="KW-0964">Secreted</keyword>
<keyword id="KW-0732">Signal</keyword>
<keyword id="KW-0765">Sulfation</keyword>